<reference key="1">
    <citation type="journal article" date="2009" name="Infect. Immun.">
        <title>Comparative genomics reveal extensive transposon-mediated genomic plasticity and diversity among potential effector proteins within the genus Coxiella.</title>
        <authorList>
            <person name="Beare P.A."/>
            <person name="Unsworth N."/>
            <person name="Andoh M."/>
            <person name="Voth D.E."/>
            <person name="Omsland A."/>
            <person name="Gilk S.D."/>
            <person name="Williams K.P."/>
            <person name="Sobral B.W."/>
            <person name="Kupko J.J. III"/>
            <person name="Porcella S.F."/>
            <person name="Samuel J.E."/>
            <person name="Heinzen R.A."/>
        </authorList>
    </citation>
    <scope>NUCLEOTIDE SEQUENCE [LARGE SCALE GENOMIC DNA]</scope>
    <source>
        <strain>Dugway 5J108-111</strain>
    </source>
</reference>
<feature type="chain" id="PRO_1000087763" description="Phosphoglucosamine mutase">
    <location>
        <begin position="1"/>
        <end position="446"/>
    </location>
</feature>
<feature type="active site" description="Phosphoserine intermediate" evidence="1">
    <location>
        <position position="101"/>
    </location>
</feature>
<feature type="binding site" description="via phosphate group" evidence="1">
    <location>
        <position position="101"/>
    </location>
    <ligand>
        <name>Mg(2+)</name>
        <dbReference type="ChEBI" id="CHEBI:18420"/>
    </ligand>
</feature>
<feature type="binding site" evidence="1">
    <location>
        <position position="240"/>
    </location>
    <ligand>
        <name>Mg(2+)</name>
        <dbReference type="ChEBI" id="CHEBI:18420"/>
    </ligand>
</feature>
<feature type="binding site" evidence="1">
    <location>
        <position position="242"/>
    </location>
    <ligand>
        <name>Mg(2+)</name>
        <dbReference type="ChEBI" id="CHEBI:18420"/>
    </ligand>
</feature>
<feature type="binding site" evidence="1">
    <location>
        <position position="244"/>
    </location>
    <ligand>
        <name>Mg(2+)</name>
        <dbReference type="ChEBI" id="CHEBI:18420"/>
    </ligand>
</feature>
<feature type="modified residue" description="Phosphoserine" evidence="1">
    <location>
        <position position="101"/>
    </location>
</feature>
<proteinExistence type="inferred from homology"/>
<keyword id="KW-0413">Isomerase</keyword>
<keyword id="KW-0460">Magnesium</keyword>
<keyword id="KW-0479">Metal-binding</keyword>
<keyword id="KW-0597">Phosphoprotein</keyword>
<evidence type="ECO:0000255" key="1">
    <source>
        <dbReference type="HAMAP-Rule" id="MF_01554"/>
    </source>
</evidence>
<dbReference type="EC" id="5.4.2.10" evidence="1"/>
<dbReference type="EMBL" id="CP000733">
    <property type="protein sequence ID" value="ABS77805.1"/>
    <property type="molecule type" value="Genomic_DNA"/>
</dbReference>
<dbReference type="RefSeq" id="WP_011997086.1">
    <property type="nucleotide sequence ID" value="NC_009727.1"/>
</dbReference>
<dbReference type="SMR" id="A9KGE3"/>
<dbReference type="KEGG" id="cbd:CBUD_1438"/>
<dbReference type="HOGENOM" id="CLU_016950_7_0_6"/>
<dbReference type="Proteomes" id="UP000008555">
    <property type="component" value="Chromosome"/>
</dbReference>
<dbReference type="GO" id="GO:0005829">
    <property type="term" value="C:cytosol"/>
    <property type="evidence" value="ECO:0007669"/>
    <property type="project" value="TreeGrafter"/>
</dbReference>
<dbReference type="GO" id="GO:0000287">
    <property type="term" value="F:magnesium ion binding"/>
    <property type="evidence" value="ECO:0007669"/>
    <property type="project" value="UniProtKB-UniRule"/>
</dbReference>
<dbReference type="GO" id="GO:0008966">
    <property type="term" value="F:phosphoglucosamine mutase activity"/>
    <property type="evidence" value="ECO:0007669"/>
    <property type="project" value="UniProtKB-UniRule"/>
</dbReference>
<dbReference type="GO" id="GO:0004615">
    <property type="term" value="F:phosphomannomutase activity"/>
    <property type="evidence" value="ECO:0007669"/>
    <property type="project" value="TreeGrafter"/>
</dbReference>
<dbReference type="GO" id="GO:0005975">
    <property type="term" value="P:carbohydrate metabolic process"/>
    <property type="evidence" value="ECO:0007669"/>
    <property type="project" value="InterPro"/>
</dbReference>
<dbReference type="GO" id="GO:0009252">
    <property type="term" value="P:peptidoglycan biosynthetic process"/>
    <property type="evidence" value="ECO:0007669"/>
    <property type="project" value="TreeGrafter"/>
</dbReference>
<dbReference type="GO" id="GO:0006048">
    <property type="term" value="P:UDP-N-acetylglucosamine biosynthetic process"/>
    <property type="evidence" value="ECO:0007669"/>
    <property type="project" value="TreeGrafter"/>
</dbReference>
<dbReference type="CDD" id="cd05802">
    <property type="entry name" value="GlmM"/>
    <property type="match status" value="1"/>
</dbReference>
<dbReference type="FunFam" id="3.30.310.50:FF:000001">
    <property type="entry name" value="Phosphoglucosamine mutase"/>
    <property type="match status" value="1"/>
</dbReference>
<dbReference type="FunFam" id="3.40.120.10:FF:000001">
    <property type="entry name" value="Phosphoglucosamine mutase"/>
    <property type="match status" value="1"/>
</dbReference>
<dbReference type="FunFam" id="3.40.120.10:FF:000003">
    <property type="entry name" value="Phosphoglucosamine mutase"/>
    <property type="match status" value="1"/>
</dbReference>
<dbReference type="Gene3D" id="3.40.120.10">
    <property type="entry name" value="Alpha-D-Glucose-1,6-Bisphosphate, subunit A, domain 3"/>
    <property type="match status" value="3"/>
</dbReference>
<dbReference type="Gene3D" id="3.30.310.50">
    <property type="entry name" value="Alpha-D-phosphohexomutase, C-terminal domain"/>
    <property type="match status" value="1"/>
</dbReference>
<dbReference type="HAMAP" id="MF_01554_B">
    <property type="entry name" value="GlmM_B"/>
    <property type="match status" value="1"/>
</dbReference>
<dbReference type="InterPro" id="IPR005844">
    <property type="entry name" value="A-D-PHexomutase_a/b/a-I"/>
</dbReference>
<dbReference type="InterPro" id="IPR016055">
    <property type="entry name" value="A-D-PHexomutase_a/b/a-I/II/III"/>
</dbReference>
<dbReference type="InterPro" id="IPR005845">
    <property type="entry name" value="A-D-PHexomutase_a/b/a-II"/>
</dbReference>
<dbReference type="InterPro" id="IPR005846">
    <property type="entry name" value="A-D-PHexomutase_a/b/a-III"/>
</dbReference>
<dbReference type="InterPro" id="IPR005843">
    <property type="entry name" value="A-D-PHexomutase_C"/>
</dbReference>
<dbReference type="InterPro" id="IPR036900">
    <property type="entry name" value="A-D-PHexomutase_C_sf"/>
</dbReference>
<dbReference type="InterPro" id="IPR005841">
    <property type="entry name" value="Alpha-D-phosphohexomutase_SF"/>
</dbReference>
<dbReference type="InterPro" id="IPR006352">
    <property type="entry name" value="GlmM_bact"/>
</dbReference>
<dbReference type="InterPro" id="IPR050060">
    <property type="entry name" value="Phosphoglucosamine_mutase"/>
</dbReference>
<dbReference type="NCBIfam" id="TIGR01455">
    <property type="entry name" value="glmM"/>
    <property type="match status" value="1"/>
</dbReference>
<dbReference type="NCBIfam" id="NF008139">
    <property type="entry name" value="PRK10887.1"/>
    <property type="match status" value="1"/>
</dbReference>
<dbReference type="PANTHER" id="PTHR42946:SF1">
    <property type="entry name" value="PHOSPHOGLUCOMUTASE (ALPHA-D-GLUCOSE-1,6-BISPHOSPHATE-DEPENDENT)"/>
    <property type="match status" value="1"/>
</dbReference>
<dbReference type="PANTHER" id="PTHR42946">
    <property type="entry name" value="PHOSPHOHEXOSE MUTASE"/>
    <property type="match status" value="1"/>
</dbReference>
<dbReference type="Pfam" id="PF02878">
    <property type="entry name" value="PGM_PMM_I"/>
    <property type="match status" value="1"/>
</dbReference>
<dbReference type="Pfam" id="PF02879">
    <property type="entry name" value="PGM_PMM_II"/>
    <property type="match status" value="1"/>
</dbReference>
<dbReference type="Pfam" id="PF02880">
    <property type="entry name" value="PGM_PMM_III"/>
    <property type="match status" value="1"/>
</dbReference>
<dbReference type="Pfam" id="PF00408">
    <property type="entry name" value="PGM_PMM_IV"/>
    <property type="match status" value="1"/>
</dbReference>
<dbReference type="PRINTS" id="PR00509">
    <property type="entry name" value="PGMPMM"/>
</dbReference>
<dbReference type="SUPFAM" id="SSF55957">
    <property type="entry name" value="Phosphoglucomutase, C-terminal domain"/>
    <property type="match status" value="1"/>
</dbReference>
<dbReference type="SUPFAM" id="SSF53738">
    <property type="entry name" value="Phosphoglucomutase, first 3 domains"/>
    <property type="match status" value="3"/>
</dbReference>
<organism>
    <name type="scientific">Coxiella burnetii (strain Dugway 5J108-111)</name>
    <dbReference type="NCBI Taxonomy" id="434922"/>
    <lineage>
        <taxon>Bacteria</taxon>
        <taxon>Pseudomonadati</taxon>
        <taxon>Pseudomonadota</taxon>
        <taxon>Gammaproteobacteria</taxon>
        <taxon>Legionellales</taxon>
        <taxon>Coxiellaceae</taxon>
        <taxon>Coxiella</taxon>
    </lineage>
</organism>
<protein>
    <recommendedName>
        <fullName evidence="1">Phosphoglucosamine mutase</fullName>
        <ecNumber evidence="1">5.4.2.10</ecNumber>
    </recommendedName>
</protein>
<accession>A9KGE3</accession>
<gene>
    <name evidence="1" type="primary">glmM</name>
    <name type="ordered locus">CBUD_1438</name>
</gene>
<name>GLMM_COXBN</name>
<comment type="function">
    <text evidence="1">Catalyzes the conversion of glucosamine-6-phosphate to glucosamine-1-phosphate.</text>
</comment>
<comment type="catalytic activity">
    <reaction evidence="1">
        <text>alpha-D-glucosamine 1-phosphate = D-glucosamine 6-phosphate</text>
        <dbReference type="Rhea" id="RHEA:23424"/>
        <dbReference type="ChEBI" id="CHEBI:58516"/>
        <dbReference type="ChEBI" id="CHEBI:58725"/>
        <dbReference type="EC" id="5.4.2.10"/>
    </reaction>
</comment>
<comment type="cofactor">
    <cofactor evidence="1">
        <name>Mg(2+)</name>
        <dbReference type="ChEBI" id="CHEBI:18420"/>
    </cofactor>
    <text evidence="1">Binds 1 Mg(2+) ion per subunit.</text>
</comment>
<comment type="PTM">
    <text evidence="1">Activated by phosphorylation.</text>
</comment>
<comment type="similarity">
    <text evidence="1">Belongs to the phosphohexose mutase family.</text>
</comment>
<sequence length="446" mass="48103">MQKKYFGTDGIRGKVGNSLINAEFMLKLGWAVGRVLANSHSATVLIGKDTRISGYMIESALQAGLSAAGVNIKLTGPMPTPAIAYLTNSVRADAGIVISASHNHYPDNGVKFFNKDGFKLSDELELAIEKQIDKPMKTVVADRLGKAARMNEAHGRYIEFCKSTFPSNLTLKGLKIVVDCANGAAYAVAPSIFHELGAEVVAIADDPDGFNINQTCGATDTAHLQEMVVKHNADVGIAFDGDGDRLIMVDHHGLRVDGDELLCIMAIDRFYLKENAPLGVVGTIMSNLGLEQTLKRHHIAFERSPVGDRYVLDLMQQKGWFLGGESSGHIVDLGFTTTGDGVITALQILRIMQQAEKPLADLKKVMVKNPQVLINVPIKGILDIAQNPNIKKAITEAEKQLNGAGRILLRPSGTEPVIRVMVEGSDEGIVRQTAEMLAAAVQQSTL</sequence>